<organism>
    <name type="scientific">Desulfovibrio desulfuricans (strain ATCC 27774 / DSM 6949 / MB)</name>
    <dbReference type="NCBI Taxonomy" id="525146"/>
    <lineage>
        <taxon>Bacteria</taxon>
        <taxon>Pseudomonadati</taxon>
        <taxon>Thermodesulfobacteriota</taxon>
        <taxon>Desulfovibrionia</taxon>
        <taxon>Desulfovibrionales</taxon>
        <taxon>Desulfovibrionaceae</taxon>
        <taxon>Desulfovibrio</taxon>
    </lineage>
</organism>
<gene>
    <name evidence="1" type="primary">gpsA</name>
    <name type="ordered locus">Ddes_1879</name>
</gene>
<feature type="chain" id="PRO_1000190135" description="Glycerol-3-phosphate dehydrogenase [NAD(P)+]">
    <location>
        <begin position="1"/>
        <end position="332"/>
    </location>
</feature>
<feature type="active site" description="Proton acceptor" evidence="1">
    <location>
        <position position="192"/>
    </location>
</feature>
<feature type="binding site" evidence="1">
    <location>
        <position position="14"/>
    </location>
    <ligand>
        <name>NADPH</name>
        <dbReference type="ChEBI" id="CHEBI:57783"/>
    </ligand>
</feature>
<feature type="binding site" evidence="1">
    <location>
        <position position="15"/>
    </location>
    <ligand>
        <name>NADPH</name>
        <dbReference type="ChEBI" id="CHEBI:57783"/>
    </ligand>
</feature>
<feature type="binding site" evidence="1">
    <location>
        <position position="35"/>
    </location>
    <ligand>
        <name>NADPH</name>
        <dbReference type="ChEBI" id="CHEBI:57783"/>
    </ligand>
</feature>
<feature type="binding site" evidence="1">
    <location>
        <position position="107"/>
    </location>
    <ligand>
        <name>NADPH</name>
        <dbReference type="ChEBI" id="CHEBI:57783"/>
    </ligand>
</feature>
<feature type="binding site" evidence="1">
    <location>
        <position position="107"/>
    </location>
    <ligand>
        <name>sn-glycerol 3-phosphate</name>
        <dbReference type="ChEBI" id="CHEBI:57597"/>
    </ligand>
</feature>
<feature type="binding site" evidence="1">
    <location>
        <position position="137"/>
    </location>
    <ligand>
        <name>sn-glycerol 3-phosphate</name>
        <dbReference type="ChEBI" id="CHEBI:57597"/>
    </ligand>
</feature>
<feature type="binding site" evidence="1">
    <location>
        <position position="139"/>
    </location>
    <ligand>
        <name>sn-glycerol 3-phosphate</name>
        <dbReference type="ChEBI" id="CHEBI:57597"/>
    </ligand>
</feature>
<feature type="binding site" evidence="1">
    <location>
        <position position="141"/>
    </location>
    <ligand>
        <name>NADPH</name>
        <dbReference type="ChEBI" id="CHEBI:57783"/>
    </ligand>
</feature>
<feature type="binding site" evidence="1">
    <location>
        <position position="192"/>
    </location>
    <ligand>
        <name>sn-glycerol 3-phosphate</name>
        <dbReference type="ChEBI" id="CHEBI:57597"/>
    </ligand>
</feature>
<feature type="binding site" evidence="1">
    <location>
        <position position="245"/>
    </location>
    <ligand>
        <name>sn-glycerol 3-phosphate</name>
        <dbReference type="ChEBI" id="CHEBI:57597"/>
    </ligand>
</feature>
<feature type="binding site" evidence="1">
    <location>
        <position position="255"/>
    </location>
    <ligand>
        <name>sn-glycerol 3-phosphate</name>
        <dbReference type="ChEBI" id="CHEBI:57597"/>
    </ligand>
</feature>
<feature type="binding site" evidence="1">
    <location>
        <position position="256"/>
    </location>
    <ligand>
        <name>NADPH</name>
        <dbReference type="ChEBI" id="CHEBI:57783"/>
    </ligand>
</feature>
<feature type="binding site" evidence="1">
    <location>
        <position position="256"/>
    </location>
    <ligand>
        <name>sn-glycerol 3-phosphate</name>
        <dbReference type="ChEBI" id="CHEBI:57597"/>
    </ligand>
</feature>
<feature type="binding site" evidence="1">
    <location>
        <position position="257"/>
    </location>
    <ligand>
        <name>sn-glycerol 3-phosphate</name>
        <dbReference type="ChEBI" id="CHEBI:57597"/>
    </ligand>
</feature>
<feature type="binding site" evidence="1">
    <location>
        <position position="280"/>
    </location>
    <ligand>
        <name>NADPH</name>
        <dbReference type="ChEBI" id="CHEBI:57783"/>
    </ligand>
</feature>
<feature type="binding site" evidence="1">
    <location>
        <position position="282"/>
    </location>
    <ligand>
        <name>NADPH</name>
        <dbReference type="ChEBI" id="CHEBI:57783"/>
    </ligand>
</feature>
<name>GPDA_DESDA</name>
<evidence type="ECO:0000255" key="1">
    <source>
        <dbReference type="HAMAP-Rule" id="MF_00394"/>
    </source>
</evidence>
<dbReference type="EC" id="1.1.1.94" evidence="1"/>
<dbReference type="EMBL" id="CP001358">
    <property type="protein sequence ID" value="ACL49775.1"/>
    <property type="molecule type" value="Genomic_DNA"/>
</dbReference>
<dbReference type="SMR" id="B8J2B6"/>
<dbReference type="STRING" id="525146.Ddes_1879"/>
<dbReference type="KEGG" id="dds:Ddes_1879"/>
<dbReference type="eggNOG" id="COG0240">
    <property type="taxonomic scope" value="Bacteria"/>
</dbReference>
<dbReference type="HOGENOM" id="CLU_033449_0_2_7"/>
<dbReference type="UniPathway" id="UPA00940"/>
<dbReference type="GO" id="GO:0005829">
    <property type="term" value="C:cytosol"/>
    <property type="evidence" value="ECO:0007669"/>
    <property type="project" value="TreeGrafter"/>
</dbReference>
<dbReference type="GO" id="GO:0047952">
    <property type="term" value="F:glycerol-3-phosphate dehydrogenase [NAD(P)+] activity"/>
    <property type="evidence" value="ECO:0007669"/>
    <property type="project" value="UniProtKB-UniRule"/>
</dbReference>
<dbReference type="GO" id="GO:0051287">
    <property type="term" value="F:NAD binding"/>
    <property type="evidence" value="ECO:0007669"/>
    <property type="project" value="InterPro"/>
</dbReference>
<dbReference type="GO" id="GO:0005975">
    <property type="term" value="P:carbohydrate metabolic process"/>
    <property type="evidence" value="ECO:0007669"/>
    <property type="project" value="InterPro"/>
</dbReference>
<dbReference type="GO" id="GO:0046167">
    <property type="term" value="P:glycerol-3-phosphate biosynthetic process"/>
    <property type="evidence" value="ECO:0007669"/>
    <property type="project" value="UniProtKB-UniRule"/>
</dbReference>
<dbReference type="GO" id="GO:0046168">
    <property type="term" value="P:glycerol-3-phosphate catabolic process"/>
    <property type="evidence" value="ECO:0007669"/>
    <property type="project" value="InterPro"/>
</dbReference>
<dbReference type="GO" id="GO:0006650">
    <property type="term" value="P:glycerophospholipid metabolic process"/>
    <property type="evidence" value="ECO:0007669"/>
    <property type="project" value="UniProtKB-UniRule"/>
</dbReference>
<dbReference type="GO" id="GO:0008654">
    <property type="term" value="P:phospholipid biosynthetic process"/>
    <property type="evidence" value="ECO:0007669"/>
    <property type="project" value="UniProtKB-KW"/>
</dbReference>
<dbReference type="FunFam" id="1.10.1040.10:FF:000001">
    <property type="entry name" value="Glycerol-3-phosphate dehydrogenase [NAD(P)+]"/>
    <property type="match status" value="1"/>
</dbReference>
<dbReference type="FunFam" id="3.40.50.720:FF:000019">
    <property type="entry name" value="Glycerol-3-phosphate dehydrogenase [NAD(P)+]"/>
    <property type="match status" value="1"/>
</dbReference>
<dbReference type="Gene3D" id="1.10.1040.10">
    <property type="entry name" value="N-(1-d-carboxylethyl)-l-norvaline Dehydrogenase, domain 2"/>
    <property type="match status" value="1"/>
</dbReference>
<dbReference type="Gene3D" id="3.40.50.720">
    <property type="entry name" value="NAD(P)-binding Rossmann-like Domain"/>
    <property type="match status" value="1"/>
</dbReference>
<dbReference type="HAMAP" id="MF_00394">
    <property type="entry name" value="NAD_Glyc3P_dehydrog"/>
    <property type="match status" value="1"/>
</dbReference>
<dbReference type="InterPro" id="IPR008927">
    <property type="entry name" value="6-PGluconate_DH-like_C_sf"/>
</dbReference>
<dbReference type="InterPro" id="IPR013328">
    <property type="entry name" value="6PGD_dom2"/>
</dbReference>
<dbReference type="InterPro" id="IPR006168">
    <property type="entry name" value="G3P_DH_NAD-dep"/>
</dbReference>
<dbReference type="InterPro" id="IPR006109">
    <property type="entry name" value="G3P_DH_NAD-dep_C"/>
</dbReference>
<dbReference type="InterPro" id="IPR011128">
    <property type="entry name" value="G3P_DH_NAD-dep_N"/>
</dbReference>
<dbReference type="InterPro" id="IPR036291">
    <property type="entry name" value="NAD(P)-bd_dom_sf"/>
</dbReference>
<dbReference type="NCBIfam" id="NF000940">
    <property type="entry name" value="PRK00094.1-2"/>
    <property type="match status" value="1"/>
</dbReference>
<dbReference type="NCBIfam" id="NF000942">
    <property type="entry name" value="PRK00094.1-4"/>
    <property type="match status" value="1"/>
</dbReference>
<dbReference type="PANTHER" id="PTHR11728">
    <property type="entry name" value="GLYCEROL-3-PHOSPHATE DEHYDROGENASE"/>
    <property type="match status" value="1"/>
</dbReference>
<dbReference type="PANTHER" id="PTHR11728:SF1">
    <property type="entry name" value="GLYCEROL-3-PHOSPHATE DEHYDROGENASE [NAD(+)] 2, CHLOROPLASTIC"/>
    <property type="match status" value="1"/>
</dbReference>
<dbReference type="Pfam" id="PF07479">
    <property type="entry name" value="NAD_Gly3P_dh_C"/>
    <property type="match status" value="1"/>
</dbReference>
<dbReference type="Pfam" id="PF01210">
    <property type="entry name" value="NAD_Gly3P_dh_N"/>
    <property type="match status" value="1"/>
</dbReference>
<dbReference type="PIRSF" id="PIRSF000114">
    <property type="entry name" value="Glycerol-3-P_dh"/>
    <property type="match status" value="1"/>
</dbReference>
<dbReference type="PRINTS" id="PR00077">
    <property type="entry name" value="GPDHDRGNASE"/>
</dbReference>
<dbReference type="SUPFAM" id="SSF48179">
    <property type="entry name" value="6-phosphogluconate dehydrogenase C-terminal domain-like"/>
    <property type="match status" value="1"/>
</dbReference>
<dbReference type="SUPFAM" id="SSF51735">
    <property type="entry name" value="NAD(P)-binding Rossmann-fold domains"/>
    <property type="match status" value="1"/>
</dbReference>
<comment type="function">
    <text evidence="1">Catalyzes the reduction of the glycolytic intermediate dihydroxyacetone phosphate (DHAP) to sn-glycerol 3-phosphate (G3P), the key precursor for phospholipid synthesis.</text>
</comment>
<comment type="catalytic activity">
    <reaction evidence="1">
        <text>sn-glycerol 3-phosphate + NAD(+) = dihydroxyacetone phosphate + NADH + H(+)</text>
        <dbReference type="Rhea" id="RHEA:11092"/>
        <dbReference type="ChEBI" id="CHEBI:15378"/>
        <dbReference type="ChEBI" id="CHEBI:57540"/>
        <dbReference type="ChEBI" id="CHEBI:57597"/>
        <dbReference type="ChEBI" id="CHEBI:57642"/>
        <dbReference type="ChEBI" id="CHEBI:57945"/>
        <dbReference type="EC" id="1.1.1.94"/>
    </reaction>
    <physiologicalReaction direction="right-to-left" evidence="1">
        <dbReference type="Rhea" id="RHEA:11094"/>
    </physiologicalReaction>
</comment>
<comment type="catalytic activity">
    <reaction evidence="1">
        <text>sn-glycerol 3-phosphate + NADP(+) = dihydroxyacetone phosphate + NADPH + H(+)</text>
        <dbReference type="Rhea" id="RHEA:11096"/>
        <dbReference type="ChEBI" id="CHEBI:15378"/>
        <dbReference type="ChEBI" id="CHEBI:57597"/>
        <dbReference type="ChEBI" id="CHEBI:57642"/>
        <dbReference type="ChEBI" id="CHEBI:57783"/>
        <dbReference type="ChEBI" id="CHEBI:58349"/>
        <dbReference type="EC" id="1.1.1.94"/>
    </reaction>
    <physiologicalReaction direction="right-to-left" evidence="1">
        <dbReference type="Rhea" id="RHEA:11098"/>
    </physiologicalReaction>
</comment>
<comment type="pathway">
    <text evidence="1">Membrane lipid metabolism; glycerophospholipid metabolism.</text>
</comment>
<comment type="subcellular location">
    <subcellularLocation>
        <location evidence="1">Cytoplasm</location>
    </subcellularLocation>
</comment>
<comment type="similarity">
    <text evidence="1">Belongs to the NAD-dependent glycerol-3-phosphate dehydrogenase family.</text>
</comment>
<proteinExistence type="inferred from homology"/>
<protein>
    <recommendedName>
        <fullName evidence="1">Glycerol-3-phosphate dehydrogenase [NAD(P)+]</fullName>
        <ecNumber evidence="1">1.1.1.94</ecNumber>
    </recommendedName>
    <alternativeName>
        <fullName evidence="1">NAD(P)(+)-dependent glycerol-3-phosphate dehydrogenase</fullName>
    </alternativeName>
    <alternativeName>
        <fullName evidence="1">NAD(P)H-dependent dihydroxyacetone-phosphate reductase</fullName>
    </alternativeName>
</protein>
<accession>B8J2B6</accession>
<reference key="1">
    <citation type="submission" date="2009-01" db="EMBL/GenBank/DDBJ databases">
        <title>Complete sequence of Desulfovibrio desulfuricans subsp. desulfuricans str. ATCC 27774.</title>
        <authorList>
            <consortium name="US DOE Joint Genome Institute"/>
            <person name="Lucas S."/>
            <person name="Copeland A."/>
            <person name="Lapidus A."/>
            <person name="Glavina del Rio T."/>
            <person name="Tice H."/>
            <person name="Bruce D."/>
            <person name="Goodwin L."/>
            <person name="Pitluck S."/>
            <person name="Sims D."/>
            <person name="Lu M."/>
            <person name="Kiss H."/>
            <person name="Meineke L."/>
            <person name="Brettin T."/>
            <person name="Detter J.C."/>
            <person name="Han C."/>
            <person name="Larimer F."/>
            <person name="Land M."/>
            <person name="Hauser L."/>
            <person name="Kyrpides N."/>
            <person name="Ovchinnikova G."/>
            <person name="Hazen T.C."/>
        </authorList>
    </citation>
    <scope>NUCLEOTIDE SEQUENCE [LARGE SCALE GENOMIC DNA]</scope>
    <source>
        <strain>ATCC 27774 / DSM 6949 / MB</strain>
    </source>
</reference>
<keyword id="KW-0963">Cytoplasm</keyword>
<keyword id="KW-0444">Lipid biosynthesis</keyword>
<keyword id="KW-0443">Lipid metabolism</keyword>
<keyword id="KW-0520">NAD</keyword>
<keyword id="KW-0521">NADP</keyword>
<keyword id="KW-0547">Nucleotide-binding</keyword>
<keyword id="KW-0560">Oxidoreductase</keyword>
<keyword id="KW-0594">Phospholipid biosynthesis</keyword>
<keyword id="KW-1208">Phospholipid metabolism</keyword>
<sequence>MADKISVCVAGGGSWGTALGHLLARGGHDVSIWLRDDAVARTINRKHENPRYLPGLPLDPRLAATTDPAVLARPLVVLAVPCQQLRPWLAGHACHFQPGVTLVNAAKGIETGSLATCAEITAQELGGLNPRYAVLSGPSFAADVLRDLPTAVVLASYDEALGRYLRGVFSGPAFRCYSSTDVVGVEMGGALKNVMAIAAGTCDGLGLGANSRAALVTRGLAEMSRLGVARGAQAHTFMGLSGLGDLTLTCTDDLSRNRQVGLRLGRGEKLEHITQSLGMVAEGVKTTAAIHEMAQKLQVEAPLTRAVYGILYKEMAPPTVLSDLMARDLREE</sequence>